<accession>Q6ENJ4</accession>
<name>PSBK_ORYNI</name>
<geneLocation type="chloroplast"/>
<reference key="1">
    <citation type="journal article" date="2004" name="Gene">
        <title>The complete nucleotide sequence of wild rice (Oryza nivara) chloroplast genome: first genome wide comparative sequence analysis of wild and cultivated rice.</title>
        <authorList>
            <person name="Masood M.S."/>
            <person name="Nishikawa T."/>
            <person name="Fukuoka S."/>
            <person name="Njenga P.K."/>
            <person name="Tsudzuki T."/>
            <person name="Kadowaki K."/>
        </authorList>
    </citation>
    <scope>NUCLEOTIDE SEQUENCE [LARGE SCALE GENOMIC DNA]</scope>
    <source>
        <strain evidence="2">cv. SL10</strain>
    </source>
</reference>
<keyword id="KW-0150">Chloroplast</keyword>
<keyword id="KW-0472">Membrane</keyword>
<keyword id="KW-0602">Photosynthesis</keyword>
<keyword id="KW-0604">Photosystem II</keyword>
<keyword id="KW-0934">Plastid</keyword>
<keyword id="KW-0674">Reaction center</keyword>
<keyword id="KW-1185">Reference proteome</keyword>
<keyword id="KW-0793">Thylakoid</keyword>
<keyword id="KW-0812">Transmembrane</keyword>
<keyword id="KW-1133">Transmembrane helix</keyword>
<organism>
    <name type="scientific">Oryza nivara</name>
    <name type="common">Indian wild rice</name>
    <name type="synonym">Oryza sativa f. spontanea</name>
    <dbReference type="NCBI Taxonomy" id="4536"/>
    <lineage>
        <taxon>Eukaryota</taxon>
        <taxon>Viridiplantae</taxon>
        <taxon>Streptophyta</taxon>
        <taxon>Embryophyta</taxon>
        <taxon>Tracheophyta</taxon>
        <taxon>Spermatophyta</taxon>
        <taxon>Magnoliopsida</taxon>
        <taxon>Liliopsida</taxon>
        <taxon>Poales</taxon>
        <taxon>Poaceae</taxon>
        <taxon>BOP clade</taxon>
        <taxon>Oryzoideae</taxon>
        <taxon>Oryzeae</taxon>
        <taxon>Oryzinae</taxon>
        <taxon>Oryza</taxon>
    </lineage>
</organism>
<protein>
    <recommendedName>
        <fullName evidence="1">Photosystem II reaction center protein K</fullName>
        <shortName evidence="1">PSII-K</shortName>
    </recommendedName>
</protein>
<sequence>MPNILSLTCICFNSVIYPTSFFFAKLPEAYAIFNPIVDFMPVIPVLFFLLAFVWQAAVSFR</sequence>
<feature type="propeptide" id="PRO_0000029499" evidence="1">
    <location>
        <begin position="1"/>
        <end position="24"/>
    </location>
</feature>
<feature type="chain" id="PRO_0000029500" description="Photosystem II reaction center protein K" evidence="1">
    <location>
        <begin position="25"/>
        <end position="61"/>
    </location>
</feature>
<feature type="transmembrane region" description="Helical" evidence="1">
    <location>
        <begin position="32"/>
        <end position="52"/>
    </location>
</feature>
<evidence type="ECO:0000255" key="1">
    <source>
        <dbReference type="HAMAP-Rule" id="MF_00441"/>
    </source>
</evidence>
<evidence type="ECO:0000312" key="2">
    <source>
        <dbReference type="Proteomes" id="UP000006591"/>
    </source>
</evidence>
<proteinExistence type="inferred from homology"/>
<dbReference type="EMBL" id="AP006728">
    <property type="protein sequence ID" value="BAD26758.1"/>
    <property type="molecule type" value="Genomic_DNA"/>
</dbReference>
<dbReference type="RefSeq" id="YP_052729.1">
    <property type="nucleotide sequence ID" value="NC_005973.1"/>
</dbReference>
<dbReference type="SMR" id="Q6ENJ4"/>
<dbReference type="STRING" id="4536.Q6ENJ4"/>
<dbReference type="GeneID" id="2885887"/>
<dbReference type="Proteomes" id="UP000006591">
    <property type="component" value="Chloroplast"/>
</dbReference>
<dbReference type="GO" id="GO:0009535">
    <property type="term" value="C:chloroplast thylakoid membrane"/>
    <property type="evidence" value="ECO:0007669"/>
    <property type="project" value="UniProtKB-SubCell"/>
</dbReference>
<dbReference type="GO" id="GO:0009539">
    <property type="term" value="C:photosystem II reaction center"/>
    <property type="evidence" value="ECO:0007669"/>
    <property type="project" value="InterPro"/>
</dbReference>
<dbReference type="GO" id="GO:0009536">
    <property type="term" value="C:plastid"/>
    <property type="evidence" value="ECO:0000305"/>
    <property type="project" value="Gramene"/>
</dbReference>
<dbReference type="GO" id="GO:0015979">
    <property type="term" value="P:photosynthesis"/>
    <property type="evidence" value="ECO:0007669"/>
    <property type="project" value="UniProtKB-UniRule"/>
</dbReference>
<dbReference type="HAMAP" id="MF_00441">
    <property type="entry name" value="PSII_PsbK"/>
    <property type="match status" value="1"/>
</dbReference>
<dbReference type="InterPro" id="IPR003687">
    <property type="entry name" value="PSII_PsbK"/>
</dbReference>
<dbReference type="InterPro" id="IPR037270">
    <property type="entry name" value="PSII_PsbK_sf"/>
</dbReference>
<dbReference type="NCBIfam" id="NF002715">
    <property type="entry name" value="PRK02553.1"/>
    <property type="match status" value="1"/>
</dbReference>
<dbReference type="PANTHER" id="PTHR35325">
    <property type="match status" value="1"/>
</dbReference>
<dbReference type="PANTHER" id="PTHR35325:SF1">
    <property type="entry name" value="PHOTOSYSTEM II REACTION CENTER PROTEIN K"/>
    <property type="match status" value="1"/>
</dbReference>
<dbReference type="Pfam" id="PF02533">
    <property type="entry name" value="PsbK"/>
    <property type="match status" value="1"/>
</dbReference>
<dbReference type="SUPFAM" id="SSF161037">
    <property type="entry name" value="Photosystem II reaction center protein K, PsbK"/>
    <property type="match status" value="1"/>
</dbReference>
<comment type="function">
    <text evidence="1">One of the components of the core complex of photosystem II (PSII). PSII is a light-driven water:plastoquinone oxidoreductase that uses light energy to abstract electrons from H(2)O, generating O(2) and a proton gradient subsequently used for ATP formation. It consists of a core antenna complex that captures photons, and an electron transfer chain that converts photonic excitation into a charge separation.</text>
</comment>
<comment type="subunit">
    <text evidence="1">PSII is composed of 1 copy each of membrane proteins PsbA, PsbB, PsbC, PsbD, PsbE, PsbF, PsbH, PsbI, PsbJ, PsbK, PsbL, PsbM, PsbT, PsbX, PsbY, PsbZ, Psb30/Ycf12, at least 3 peripheral proteins of the oxygen-evolving complex and a large number of cofactors. It forms dimeric complexes.</text>
</comment>
<comment type="subcellular location">
    <subcellularLocation>
        <location evidence="1">Plastid</location>
        <location evidence="1">Chloroplast thylakoid membrane</location>
        <topology evidence="1">Single-pass membrane protein</topology>
    </subcellularLocation>
</comment>
<comment type="similarity">
    <text evidence="1">Belongs to the PsbK family.</text>
</comment>
<gene>
    <name evidence="1" type="primary">psbK</name>
</gene>